<name>LST2_DROAN</name>
<proteinExistence type="inferred from homology"/>
<keyword id="KW-0479">Metal-binding</keyword>
<keyword id="KW-0597">Phosphoprotein</keyword>
<keyword id="KW-1185">Reference proteome</keyword>
<keyword id="KW-0862">Zinc</keyword>
<keyword id="KW-0863">Zinc-finger</keyword>
<dbReference type="EMBL" id="CH902623">
    <property type="protein sequence ID" value="EDV30421.1"/>
    <property type="molecule type" value="Genomic_DNA"/>
</dbReference>
<dbReference type="SMR" id="B3MT31"/>
<dbReference type="FunCoup" id="B3MT31">
    <property type="interactions" value="178"/>
</dbReference>
<dbReference type="EnsemblMetazoa" id="FBtr0383557">
    <property type="protein sequence ID" value="FBpp0343678"/>
    <property type="gene ID" value="FBgn0099940"/>
</dbReference>
<dbReference type="EnsemblMetazoa" id="XM_001964589.4">
    <property type="protein sequence ID" value="XP_001964625.2"/>
    <property type="gene ID" value="LOC6505595"/>
</dbReference>
<dbReference type="GeneID" id="6505595"/>
<dbReference type="KEGG" id="dan:6505595"/>
<dbReference type="eggNOG" id="KOG1819">
    <property type="taxonomic scope" value="Eukaryota"/>
</dbReference>
<dbReference type="HOGENOM" id="CLU_007360_1_0_1"/>
<dbReference type="InParanoid" id="B3MT31"/>
<dbReference type="OMA" id="CYVREVQ"/>
<dbReference type="OrthoDB" id="20035at2759"/>
<dbReference type="PhylomeDB" id="B3MT31"/>
<dbReference type="Proteomes" id="UP000007801">
    <property type="component" value="Unassembled WGS sequence"/>
</dbReference>
<dbReference type="GO" id="GO:0031901">
    <property type="term" value="C:early endosome membrane"/>
    <property type="evidence" value="ECO:0007669"/>
    <property type="project" value="TreeGrafter"/>
</dbReference>
<dbReference type="GO" id="GO:0008270">
    <property type="term" value="F:zinc ion binding"/>
    <property type="evidence" value="ECO:0007669"/>
    <property type="project" value="UniProtKB-KW"/>
</dbReference>
<dbReference type="CDD" id="cd15731">
    <property type="entry name" value="FYVE_LST2"/>
    <property type="match status" value="1"/>
</dbReference>
<dbReference type="FunFam" id="3.30.40.10:FF:000073">
    <property type="entry name" value="myotubularin-related protein 4 isoform X2"/>
    <property type="match status" value="1"/>
</dbReference>
<dbReference type="Gene3D" id="3.30.40.10">
    <property type="entry name" value="Zinc/RING finger domain, C3HC4 (zinc finger)"/>
    <property type="match status" value="1"/>
</dbReference>
<dbReference type="InterPro" id="IPR043269">
    <property type="entry name" value="FYVE_LST2"/>
</dbReference>
<dbReference type="InterPro" id="IPR051118">
    <property type="entry name" value="LST-2"/>
</dbReference>
<dbReference type="InterPro" id="IPR000306">
    <property type="entry name" value="Znf_FYVE"/>
</dbReference>
<dbReference type="InterPro" id="IPR017455">
    <property type="entry name" value="Znf_FYVE-rel"/>
</dbReference>
<dbReference type="InterPro" id="IPR011011">
    <property type="entry name" value="Znf_FYVE_PHD"/>
</dbReference>
<dbReference type="InterPro" id="IPR013083">
    <property type="entry name" value="Znf_RING/FYVE/PHD"/>
</dbReference>
<dbReference type="PANTHER" id="PTHR46465">
    <property type="entry name" value="LATERAL SIGNALING TARGET PROTEIN 2 HOMOLOG"/>
    <property type="match status" value="1"/>
</dbReference>
<dbReference type="PANTHER" id="PTHR46465:SF2">
    <property type="entry name" value="LATERAL SIGNALING TARGET PROTEIN 2 HOMOLOG"/>
    <property type="match status" value="1"/>
</dbReference>
<dbReference type="Pfam" id="PF01363">
    <property type="entry name" value="FYVE"/>
    <property type="match status" value="1"/>
</dbReference>
<dbReference type="SMART" id="SM00064">
    <property type="entry name" value="FYVE"/>
    <property type="match status" value="1"/>
</dbReference>
<dbReference type="SUPFAM" id="SSF57903">
    <property type="entry name" value="FYVE/PHD zinc finger"/>
    <property type="match status" value="1"/>
</dbReference>
<dbReference type="PROSITE" id="PS50178">
    <property type="entry name" value="ZF_FYVE"/>
    <property type="match status" value="1"/>
</dbReference>
<sequence>MNGSGGRQMQCGKKADDKSLLARFFHADRSLTAVASELDSFDGRAEPDRCTRLVSKLRLNQDKVLAITNLIMEELLGEDRDPRAFRAKFPEEVLQENLAGQLWFGAECLAAGSSIMNREAESKEMRPLAQAVTKSLGNVRVLLRDQCLRNNVPNSKTLQLDLNDSTTEQLYESLKIFDRLFAEFELSYVSAMVQVKSRHEYEMQQWIGVLFSETLQRALKIGLLDQDMVDAFDPGLMFSIPRLAIVAGLVVYAKGPLNMDMPGDQLSEMFRPFRTILIKIRDLLRNLNHEELYQLEKVLCTNEDINAKAPLGSSSIEAPSPEHSSHHPTTSSNNNNNNGDTTGTTNTHRTVERLVDQRNNNNNNNTSSAPALDKAANRSPSMLSLSPNSTPTASPAPSPTPSHSIASTSSSATGSTHPPADWSDGDDEDEEDDDDDIEVEEEELDSTDDETDEEQLLKDIVAADCASGYLIPNTNLGNLLQPQEVPLTDNFVASEDDEYGAGEQQRQRHRDGQEDEPSTSAAMLAASRTLQRLRLPSSDAEPLAEQSTIKTPEQEQDQPHQSVYRHRHSHRHHHRHHHHHHQRHHHHQHQQPPQPHPHRTTRSGRKRCSLDSTESEATQPERDREPSQASGDTSAASSLSDDVSLAMRNTTARLKFKSTENLLHRLFVCIAGVADQLQTNFASDLRQILRSVFLMNMSSAQEEIDIPEKTKESELFEFRASENDVIQESAGSNQSIYSAEEVNPELDNVFSAGSGGGSPGNGNQANASAQRHSAGGSIQRNNTVDDGSPTGGGALLATSRSHVMRSRSLGDQESASTSTSSSQLHQEQQQLQIQVQRQRNNSVGSNTPSSASSTSSSSEQNSPVSARSGSRRRLQSNNETQMPSSATVTTTATATLAPPAWIPDGKAPRCMSCQTPFTAFRRRHHCRNCGGVFCGVCSNASAPLPKYGLTKAVRVCRECYVREVRSGMSVQGVPSVQERLTATAS</sequence>
<accession>B3MT31</accession>
<protein>
    <recommendedName>
        <fullName>Lateral signaling target protein 2 homolog</fullName>
    </recommendedName>
</protein>
<feature type="chain" id="PRO_0000378962" description="Lateral signaling target protein 2 homolog">
    <location>
        <begin position="1"/>
        <end position="985"/>
    </location>
</feature>
<feature type="zinc finger region" description="FYVE-type" evidence="2">
    <location>
        <begin position="904"/>
        <end position="964"/>
    </location>
</feature>
<feature type="region of interest" description="Disordered" evidence="3">
    <location>
        <begin position="310"/>
        <end position="453"/>
    </location>
</feature>
<feature type="region of interest" description="Disordered" evidence="3">
    <location>
        <begin position="498"/>
        <end position="520"/>
    </location>
</feature>
<feature type="region of interest" description="Disordered" evidence="3">
    <location>
        <begin position="533"/>
        <end position="640"/>
    </location>
</feature>
<feature type="region of interest" description="Disordered" evidence="3">
    <location>
        <begin position="747"/>
        <end position="892"/>
    </location>
</feature>
<feature type="compositionally biased region" description="Low complexity" evidence="3">
    <location>
        <begin position="327"/>
        <end position="348"/>
    </location>
</feature>
<feature type="compositionally biased region" description="Low complexity" evidence="3">
    <location>
        <begin position="384"/>
        <end position="393"/>
    </location>
</feature>
<feature type="compositionally biased region" description="Low complexity" evidence="3">
    <location>
        <begin position="401"/>
        <end position="422"/>
    </location>
</feature>
<feature type="compositionally biased region" description="Acidic residues" evidence="3">
    <location>
        <begin position="423"/>
        <end position="453"/>
    </location>
</feature>
<feature type="compositionally biased region" description="Basic residues" evidence="3">
    <location>
        <begin position="563"/>
        <end position="589"/>
    </location>
</feature>
<feature type="compositionally biased region" description="Basic residues" evidence="3">
    <location>
        <begin position="596"/>
        <end position="607"/>
    </location>
</feature>
<feature type="compositionally biased region" description="Low complexity" evidence="3">
    <location>
        <begin position="629"/>
        <end position="640"/>
    </location>
</feature>
<feature type="compositionally biased region" description="Low complexity" evidence="3">
    <location>
        <begin position="761"/>
        <end position="770"/>
    </location>
</feature>
<feature type="compositionally biased region" description="Polar residues" evidence="3">
    <location>
        <begin position="776"/>
        <end position="785"/>
    </location>
</feature>
<feature type="compositionally biased region" description="Low complexity" evidence="3">
    <location>
        <begin position="812"/>
        <end position="866"/>
    </location>
</feature>
<feature type="compositionally biased region" description="Polar residues" evidence="3">
    <location>
        <begin position="875"/>
        <end position="885"/>
    </location>
</feature>
<feature type="binding site" evidence="2">
    <location>
        <position position="910"/>
    </location>
    <ligand>
        <name>Zn(2+)</name>
        <dbReference type="ChEBI" id="CHEBI:29105"/>
        <label>1</label>
    </ligand>
</feature>
<feature type="binding site" evidence="2">
    <location>
        <position position="913"/>
    </location>
    <ligand>
        <name>Zn(2+)</name>
        <dbReference type="ChEBI" id="CHEBI:29105"/>
        <label>1</label>
    </ligand>
</feature>
<feature type="binding site" evidence="2">
    <location>
        <position position="926"/>
    </location>
    <ligand>
        <name>Zn(2+)</name>
        <dbReference type="ChEBI" id="CHEBI:29105"/>
        <label>2</label>
    </ligand>
</feature>
<feature type="binding site" evidence="2">
    <location>
        <position position="929"/>
    </location>
    <ligand>
        <name>Zn(2+)</name>
        <dbReference type="ChEBI" id="CHEBI:29105"/>
        <label>2</label>
    </ligand>
</feature>
<feature type="binding site" evidence="2">
    <location>
        <position position="934"/>
    </location>
    <ligand>
        <name>Zn(2+)</name>
        <dbReference type="ChEBI" id="CHEBI:29105"/>
        <label>1</label>
    </ligand>
</feature>
<feature type="binding site" evidence="2">
    <location>
        <position position="937"/>
    </location>
    <ligand>
        <name>Zn(2+)</name>
        <dbReference type="ChEBI" id="CHEBI:29105"/>
        <label>1</label>
    </ligand>
</feature>
<feature type="binding site" evidence="2">
    <location>
        <position position="956"/>
    </location>
    <ligand>
        <name>Zn(2+)</name>
        <dbReference type="ChEBI" id="CHEBI:29105"/>
        <label>2</label>
    </ligand>
</feature>
<feature type="binding site" evidence="2">
    <location>
        <position position="959"/>
    </location>
    <ligand>
        <name>Zn(2+)</name>
        <dbReference type="ChEBI" id="CHEBI:29105"/>
        <label>2</label>
    </ligand>
</feature>
<feature type="modified residue" description="Phosphoserine" evidence="1">
    <location>
        <position position="537"/>
    </location>
</feature>
<feature type="modified residue" description="Phosphoserine" evidence="1">
    <location>
        <position position="538"/>
    </location>
</feature>
<feature type="modified residue" description="Phosphoserine" evidence="1">
    <location>
        <position position="808"/>
    </location>
</feature>
<reference key="1">
    <citation type="journal article" date="2007" name="Nature">
        <title>Evolution of genes and genomes on the Drosophila phylogeny.</title>
        <authorList>
            <consortium name="Drosophila 12 genomes consortium"/>
        </authorList>
    </citation>
    <scope>NUCLEOTIDE SEQUENCE [LARGE SCALE GENOMIC DNA]</scope>
    <source>
        <strain>Tucson 14024-0371.13</strain>
    </source>
</reference>
<comment type="function">
    <text evidence="1">Negative regulator of epidermal growth factor receptor (EGFR) signaling.</text>
</comment>
<comment type="similarity">
    <text evidence="4">Belongs to the lst-2 family.</text>
</comment>
<organism>
    <name type="scientific">Drosophila ananassae</name>
    <name type="common">Fruit fly</name>
    <dbReference type="NCBI Taxonomy" id="7217"/>
    <lineage>
        <taxon>Eukaryota</taxon>
        <taxon>Metazoa</taxon>
        <taxon>Ecdysozoa</taxon>
        <taxon>Arthropoda</taxon>
        <taxon>Hexapoda</taxon>
        <taxon>Insecta</taxon>
        <taxon>Pterygota</taxon>
        <taxon>Neoptera</taxon>
        <taxon>Endopterygota</taxon>
        <taxon>Diptera</taxon>
        <taxon>Brachycera</taxon>
        <taxon>Muscomorpha</taxon>
        <taxon>Ephydroidea</taxon>
        <taxon>Drosophilidae</taxon>
        <taxon>Drosophila</taxon>
        <taxon>Sophophora</taxon>
    </lineage>
</organism>
<evidence type="ECO:0000250" key="1"/>
<evidence type="ECO:0000255" key="2">
    <source>
        <dbReference type="PROSITE-ProRule" id="PRU00091"/>
    </source>
</evidence>
<evidence type="ECO:0000256" key="3">
    <source>
        <dbReference type="SAM" id="MobiDB-lite"/>
    </source>
</evidence>
<evidence type="ECO:0000305" key="4"/>
<gene>
    <name type="ORF">GF22946</name>
</gene>